<organism>
    <name type="scientific">Staphylococcus aureus (strain MRSA252)</name>
    <dbReference type="NCBI Taxonomy" id="282458"/>
    <lineage>
        <taxon>Bacteria</taxon>
        <taxon>Bacillati</taxon>
        <taxon>Bacillota</taxon>
        <taxon>Bacilli</taxon>
        <taxon>Bacillales</taxon>
        <taxon>Staphylococcaceae</taxon>
        <taxon>Staphylococcus</taxon>
    </lineage>
</organism>
<accession>Q6GFM2</accession>
<gene>
    <name type="primary">traP</name>
    <name type="ordered locus">SAR1926</name>
</gene>
<comment type="function">
    <text evidence="1">Signal transduction protein, which is a major regulator of staphylococcal pathogenesis. Phosphorylated TRAP leads to the activation of agr system and consequent RNAIII synthesis resulting in the expression of several virulence factors. Up-regulates the expression of most toxins and genes known to be necessary for biofilm formation (By similarity).</text>
</comment>
<comment type="subcellular location">
    <subcellularLocation>
        <location>Membrane</location>
    </subcellularLocation>
    <text evidence="1">Membrane-associated.</text>
</comment>
<comment type="PTM">
    <text evidence="1">Each of the three conserved histidine residues contributes to TRAP phosphorylation. Phosphorylation is essential for TRAP activity (By similarity).</text>
</comment>
<comment type="PTM">
    <text evidence="1">Phosphorylation of TRAP is activated by RAP and necessary for the induction of RNAIII gene expression but not for ongoing transcription. TRAP is dephosphorylated from the mid-exponential phase of growth, which is when agr is activated and AIP is produced. RIP acts by inhibiting TRAP phosphorylation (By similarity).</text>
</comment>
<comment type="similarity">
    <text evidence="2">Belongs to the TRAP family.</text>
</comment>
<reference key="1">
    <citation type="journal article" date="2004" name="Proc. Natl. Acad. Sci. U.S.A.">
        <title>Complete genomes of two clinical Staphylococcus aureus strains: evidence for the rapid evolution of virulence and drug resistance.</title>
        <authorList>
            <person name="Holden M.T.G."/>
            <person name="Feil E.J."/>
            <person name="Lindsay J.A."/>
            <person name="Peacock S.J."/>
            <person name="Day N.P.J."/>
            <person name="Enright M.C."/>
            <person name="Foster T.J."/>
            <person name="Moore C.E."/>
            <person name="Hurst L."/>
            <person name="Atkin R."/>
            <person name="Barron A."/>
            <person name="Bason N."/>
            <person name="Bentley S.D."/>
            <person name="Chillingworth C."/>
            <person name="Chillingworth T."/>
            <person name="Churcher C."/>
            <person name="Clark L."/>
            <person name="Corton C."/>
            <person name="Cronin A."/>
            <person name="Doggett J."/>
            <person name="Dowd L."/>
            <person name="Feltwell T."/>
            <person name="Hance Z."/>
            <person name="Harris B."/>
            <person name="Hauser H."/>
            <person name="Holroyd S."/>
            <person name="Jagels K."/>
            <person name="James K.D."/>
            <person name="Lennard N."/>
            <person name="Line A."/>
            <person name="Mayes R."/>
            <person name="Moule S."/>
            <person name="Mungall K."/>
            <person name="Ormond D."/>
            <person name="Quail M.A."/>
            <person name="Rabbinowitsch E."/>
            <person name="Rutherford K.M."/>
            <person name="Sanders M."/>
            <person name="Sharp S."/>
            <person name="Simmonds M."/>
            <person name="Stevens K."/>
            <person name="Whitehead S."/>
            <person name="Barrell B.G."/>
            <person name="Spratt B.G."/>
            <person name="Parkhill J."/>
        </authorList>
    </citation>
    <scope>NUCLEOTIDE SEQUENCE [LARGE SCALE GENOMIC DNA]</scope>
    <source>
        <strain>MRSA252</strain>
    </source>
</reference>
<dbReference type="EMBL" id="BX571856">
    <property type="protein sequence ID" value="CAG40912.1"/>
    <property type="molecule type" value="Genomic_DNA"/>
</dbReference>
<dbReference type="RefSeq" id="WP_000737983.1">
    <property type="nucleotide sequence ID" value="NC_002952.2"/>
</dbReference>
<dbReference type="SMR" id="Q6GFM2"/>
<dbReference type="KEGG" id="sar:SAR1926"/>
<dbReference type="HOGENOM" id="CLU_116220_0_0_9"/>
<dbReference type="Proteomes" id="UP000000596">
    <property type="component" value="Chromosome"/>
</dbReference>
<dbReference type="GO" id="GO:0016020">
    <property type="term" value="C:membrane"/>
    <property type="evidence" value="ECO:0007669"/>
    <property type="project" value="UniProtKB-SubCell"/>
</dbReference>
<dbReference type="Gene3D" id="3.30.70.100">
    <property type="match status" value="1"/>
</dbReference>
<dbReference type="InterPro" id="IPR007138">
    <property type="entry name" value="ABM_dom"/>
</dbReference>
<dbReference type="InterPro" id="IPR011008">
    <property type="entry name" value="Dimeric_a/b-barrel"/>
</dbReference>
<dbReference type="InterPro" id="IPR050404">
    <property type="entry name" value="Heme-degrading_MO"/>
</dbReference>
<dbReference type="PANTHER" id="PTHR34474">
    <property type="entry name" value="SIGNAL TRANSDUCTION PROTEIN TRAP"/>
    <property type="match status" value="1"/>
</dbReference>
<dbReference type="PANTHER" id="PTHR34474:SF2">
    <property type="entry name" value="SIGNAL TRANSDUCTION PROTEIN TRAP"/>
    <property type="match status" value="1"/>
</dbReference>
<dbReference type="SUPFAM" id="SSF54909">
    <property type="entry name" value="Dimeric alpha+beta barrel"/>
    <property type="match status" value="1"/>
</dbReference>
<dbReference type="PROSITE" id="PS51725">
    <property type="entry name" value="ABM"/>
    <property type="match status" value="1"/>
</dbReference>
<keyword id="KW-0472">Membrane</keyword>
<keyword id="KW-0597">Phosphoprotein</keyword>
<keyword id="KW-0843">Virulence</keyword>
<evidence type="ECO:0000250" key="1"/>
<evidence type="ECO:0000305" key="2"/>
<feature type="chain" id="PRO_0000289338" description="Signal transduction protein TRAP">
    <location>
        <begin position="1"/>
        <end position="167"/>
    </location>
</feature>
<feature type="domain" description="ABM">
    <location>
        <begin position="67"/>
        <end position="158"/>
    </location>
</feature>
<feature type="modified residue" description="Phosphohistidine" evidence="1">
    <location>
        <position position="66"/>
    </location>
</feature>
<feature type="modified residue" description="Phosphohistidine" evidence="1">
    <location>
        <position position="79"/>
    </location>
</feature>
<feature type="modified residue" description="Phosphohistidine" evidence="1">
    <location>
        <position position="154"/>
    </location>
</feature>
<protein>
    <recommendedName>
        <fullName>Signal transduction protein TRAP</fullName>
    </recommendedName>
    <alternativeName>
        <fullName>Target of RNAIII-activating protein</fullName>
    </alternativeName>
</protein>
<proteinExistence type="inferred from homology"/>
<name>TRAP_STAAR</name>
<sequence length="167" mass="19601">MKKLYTSYGTYGFLNQIKINNPSHHLFQFSTADSSVIFEETEENTVLKSPSIYEVIKEIGAFNEDHFYCAIFIPSTEDHVYQLEKKLISVDDNFKNFGGFKSYRLLRPVKGTTYKIYFGFADRQTYEDFKNSDAFKDHFSKEALSHYFGSSGQHSSYFERYLYPIKE</sequence>